<proteinExistence type="inferred from homology"/>
<gene>
    <name type="ordered locus">CMM_2976</name>
</gene>
<feature type="chain" id="PRO_1000080182" description="Putative membrane protein insertion efficiency factor">
    <location>
        <begin position="1"/>
        <end position="103"/>
    </location>
</feature>
<dbReference type="EMBL" id="AM711867">
    <property type="protein sequence ID" value="CAN03063.1"/>
    <property type="molecule type" value="Genomic_DNA"/>
</dbReference>
<dbReference type="RefSeq" id="WP_012039663.1">
    <property type="nucleotide sequence ID" value="NC_009480.1"/>
</dbReference>
<dbReference type="GeneID" id="92948994"/>
<dbReference type="KEGG" id="cmi:CMM_2976"/>
<dbReference type="eggNOG" id="COG0759">
    <property type="taxonomic scope" value="Bacteria"/>
</dbReference>
<dbReference type="HOGENOM" id="CLU_144811_5_0_11"/>
<dbReference type="OrthoDB" id="9801753at2"/>
<dbReference type="Proteomes" id="UP000001564">
    <property type="component" value="Chromosome"/>
</dbReference>
<dbReference type="GO" id="GO:0005886">
    <property type="term" value="C:plasma membrane"/>
    <property type="evidence" value="ECO:0007669"/>
    <property type="project" value="UniProtKB-SubCell"/>
</dbReference>
<dbReference type="HAMAP" id="MF_00386">
    <property type="entry name" value="UPF0161_YidD"/>
    <property type="match status" value="1"/>
</dbReference>
<dbReference type="InterPro" id="IPR002696">
    <property type="entry name" value="Membr_insert_effic_factor_YidD"/>
</dbReference>
<dbReference type="NCBIfam" id="TIGR00278">
    <property type="entry name" value="membrane protein insertion efficiency factor YidD"/>
    <property type="match status" value="1"/>
</dbReference>
<dbReference type="PANTHER" id="PTHR33383">
    <property type="entry name" value="MEMBRANE PROTEIN INSERTION EFFICIENCY FACTOR-RELATED"/>
    <property type="match status" value="1"/>
</dbReference>
<dbReference type="PANTHER" id="PTHR33383:SF1">
    <property type="entry name" value="MEMBRANE PROTEIN INSERTION EFFICIENCY FACTOR-RELATED"/>
    <property type="match status" value="1"/>
</dbReference>
<dbReference type="Pfam" id="PF01809">
    <property type="entry name" value="YidD"/>
    <property type="match status" value="1"/>
</dbReference>
<dbReference type="SMART" id="SM01234">
    <property type="entry name" value="Haemolytic"/>
    <property type="match status" value="1"/>
</dbReference>
<name>YIDD_CLAM3</name>
<protein>
    <recommendedName>
        <fullName evidence="1">Putative membrane protein insertion efficiency factor</fullName>
    </recommendedName>
</protein>
<comment type="function">
    <text evidence="1">Could be involved in insertion of integral membrane proteins into the membrane.</text>
</comment>
<comment type="subcellular location">
    <subcellularLocation>
        <location evidence="1">Cell membrane</location>
        <topology evidence="1">Peripheral membrane protein</topology>
        <orientation evidence="1">Cytoplasmic side</orientation>
    </subcellularLocation>
</comment>
<comment type="similarity">
    <text evidence="1">Belongs to the UPF0161 family.</text>
</comment>
<reference key="1">
    <citation type="journal article" date="2008" name="J. Bacteriol.">
        <title>The genome sequence of the tomato-pathogenic actinomycete Clavibacter michiganensis subsp. michiganensis NCPPB382 reveals a large island involved in pathogenicity.</title>
        <authorList>
            <person name="Gartemann K.-H."/>
            <person name="Abt B."/>
            <person name="Bekel T."/>
            <person name="Burger A."/>
            <person name="Engemann J."/>
            <person name="Fluegel M."/>
            <person name="Gaigalat L."/>
            <person name="Goesmann A."/>
            <person name="Graefen I."/>
            <person name="Kalinowski J."/>
            <person name="Kaup O."/>
            <person name="Kirchner O."/>
            <person name="Krause L."/>
            <person name="Linke B."/>
            <person name="McHardy A."/>
            <person name="Meyer F."/>
            <person name="Pohle S."/>
            <person name="Rueckert C."/>
            <person name="Schneiker S."/>
            <person name="Zellermann E.-M."/>
            <person name="Puehler A."/>
            <person name="Eichenlaub R."/>
            <person name="Kaiser O."/>
            <person name="Bartels D."/>
        </authorList>
    </citation>
    <scope>NUCLEOTIDE SEQUENCE [LARGE SCALE GENOMIC DNA]</scope>
    <source>
        <strain>NCPPB 382</strain>
    </source>
</reference>
<evidence type="ECO:0000255" key="1">
    <source>
        <dbReference type="HAMAP-Rule" id="MF_00386"/>
    </source>
</evidence>
<keyword id="KW-1003">Cell membrane</keyword>
<keyword id="KW-0472">Membrane</keyword>
<organism>
    <name type="scientific">Clavibacter michiganensis subsp. michiganensis (strain NCPPB 382)</name>
    <dbReference type="NCBI Taxonomy" id="443906"/>
    <lineage>
        <taxon>Bacteria</taxon>
        <taxon>Bacillati</taxon>
        <taxon>Actinomycetota</taxon>
        <taxon>Actinomycetes</taxon>
        <taxon>Micrococcales</taxon>
        <taxon>Microbacteriaceae</taxon>
        <taxon>Clavibacter</taxon>
    </lineage>
</organism>
<sequence>MKRALTSVVLAPRNAAIAVISLYRRVVSPIYGDVCRYYPSCSAYGLEAVQEHGLVHGGVLAAWRVCRCHPWAEGGIDDVPARRVQQYRRTRLGFVVAPSHGKG</sequence>
<accession>A5CVC4</accession>